<keyword id="KW-0028">Amino-acid biosynthesis</keyword>
<keyword id="KW-0963">Cytoplasm</keyword>
<keyword id="KW-0220">Diaminopimelate biosynthesis</keyword>
<keyword id="KW-0456">Lyase</keyword>
<keyword id="KW-0457">Lysine biosynthesis</keyword>
<keyword id="KW-1185">Reference proteome</keyword>
<keyword id="KW-0704">Schiff base</keyword>
<protein>
    <recommendedName>
        <fullName evidence="1">4-hydroxy-tetrahydrodipicolinate synthase</fullName>
        <shortName evidence="1">HTPA synthase</shortName>
        <ecNumber evidence="1">4.3.3.7</ecNumber>
    </recommendedName>
</protein>
<dbReference type="EC" id="4.3.3.7" evidence="1"/>
<dbReference type="EMBL" id="CP001100">
    <property type="protein sequence ID" value="ACF14433.1"/>
    <property type="molecule type" value="Genomic_DNA"/>
</dbReference>
<dbReference type="RefSeq" id="WP_012500516.1">
    <property type="nucleotide sequence ID" value="NC_011026.1"/>
</dbReference>
<dbReference type="SMR" id="B3QUT2"/>
<dbReference type="STRING" id="517418.Ctha_1979"/>
<dbReference type="KEGG" id="cts:Ctha_1979"/>
<dbReference type="eggNOG" id="COG0329">
    <property type="taxonomic scope" value="Bacteria"/>
</dbReference>
<dbReference type="HOGENOM" id="CLU_049343_7_0_10"/>
<dbReference type="OrthoDB" id="9782828at2"/>
<dbReference type="UniPathway" id="UPA00034">
    <property type="reaction ID" value="UER00017"/>
</dbReference>
<dbReference type="Proteomes" id="UP000001208">
    <property type="component" value="Chromosome"/>
</dbReference>
<dbReference type="GO" id="GO:0005829">
    <property type="term" value="C:cytosol"/>
    <property type="evidence" value="ECO:0007669"/>
    <property type="project" value="TreeGrafter"/>
</dbReference>
<dbReference type="GO" id="GO:0008840">
    <property type="term" value="F:4-hydroxy-tetrahydrodipicolinate synthase activity"/>
    <property type="evidence" value="ECO:0007669"/>
    <property type="project" value="UniProtKB-UniRule"/>
</dbReference>
<dbReference type="GO" id="GO:0019877">
    <property type="term" value="P:diaminopimelate biosynthetic process"/>
    <property type="evidence" value="ECO:0007669"/>
    <property type="project" value="UniProtKB-UniRule"/>
</dbReference>
<dbReference type="GO" id="GO:0009089">
    <property type="term" value="P:lysine biosynthetic process via diaminopimelate"/>
    <property type="evidence" value="ECO:0007669"/>
    <property type="project" value="UniProtKB-UniRule"/>
</dbReference>
<dbReference type="CDD" id="cd00950">
    <property type="entry name" value="DHDPS"/>
    <property type="match status" value="1"/>
</dbReference>
<dbReference type="Gene3D" id="3.20.20.70">
    <property type="entry name" value="Aldolase class I"/>
    <property type="match status" value="1"/>
</dbReference>
<dbReference type="HAMAP" id="MF_00418">
    <property type="entry name" value="DapA"/>
    <property type="match status" value="1"/>
</dbReference>
<dbReference type="InterPro" id="IPR013785">
    <property type="entry name" value="Aldolase_TIM"/>
</dbReference>
<dbReference type="InterPro" id="IPR005263">
    <property type="entry name" value="DapA"/>
</dbReference>
<dbReference type="InterPro" id="IPR002220">
    <property type="entry name" value="DapA-like"/>
</dbReference>
<dbReference type="InterPro" id="IPR020625">
    <property type="entry name" value="Schiff_base-form_aldolases_AS"/>
</dbReference>
<dbReference type="NCBIfam" id="TIGR00674">
    <property type="entry name" value="dapA"/>
    <property type="match status" value="1"/>
</dbReference>
<dbReference type="PANTHER" id="PTHR12128:SF66">
    <property type="entry name" value="4-HYDROXY-2-OXOGLUTARATE ALDOLASE, MITOCHONDRIAL"/>
    <property type="match status" value="1"/>
</dbReference>
<dbReference type="PANTHER" id="PTHR12128">
    <property type="entry name" value="DIHYDRODIPICOLINATE SYNTHASE"/>
    <property type="match status" value="1"/>
</dbReference>
<dbReference type="Pfam" id="PF00701">
    <property type="entry name" value="DHDPS"/>
    <property type="match status" value="1"/>
</dbReference>
<dbReference type="PIRSF" id="PIRSF001365">
    <property type="entry name" value="DHDPS"/>
    <property type="match status" value="1"/>
</dbReference>
<dbReference type="PRINTS" id="PR00146">
    <property type="entry name" value="DHPICSNTHASE"/>
</dbReference>
<dbReference type="SMART" id="SM01130">
    <property type="entry name" value="DHDPS"/>
    <property type="match status" value="1"/>
</dbReference>
<dbReference type="SUPFAM" id="SSF51569">
    <property type="entry name" value="Aldolase"/>
    <property type="match status" value="1"/>
</dbReference>
<dbReference type="PROSITE" id="PS00666">
    <property type="entry name" value="DHDPS_2"/>
    <property type="match status" value="1"/>
</dbReference>
<accession>B3QUT2</accession>
<comment type="function">
    <text evidence="1">Catalyzes the condensation of (S)-aspartate-beta-semialdehyde [(S)-ASA] and pyruvate to 4-hydroxy-tetrahydrodipicolinate (HTPA).</text>
</comment>
<comment type="catalytic activity">
    <reaction evidence="1">
        <text>L-aspartate 4-semialdehyde + pyruvate = (2S,4S)-4-hydroxy-2,3,4,5-tetrahydrodipicolinate + H2O + H(+)</text>
        <dbReference type="Rhea" id="RHEA:34171"/>
        <dbReference type="ChEBI" id="CHEBI:15361"/>
        <dbReference type="ChEBI" id="CHEBI:15377"/>
        <dbReference type="ChEBI" id="CHEBI:15378"/>
        <dbReference type="ChEBI" id="CHEBI:67139"/>
        <dbReference type="ChEBI" id="CHEBI:537519"/>
        <dbReference type="EC" id="4.3.3.7"/>
    </reaction>
</comment>
<comment type="pathway">
    <text evidence="1">Amino-acid biosynthesis; L-lysine biosynthesis via DAP pathway; (S)-tetrahydrodipicolinate from L-aspartate: step 3/4.</text>
</comment>
<comment type="subunit">
    <text evidence="1">Homotetramer; dimer of dimers.</text>
</comment>
<comment type="subcellular location">
    <subcellularLocation>
        <location evidence="1">Cytoplasm</location>
    </subcellularLocation>
</comment>
<comment type="similarity">
    <text evidence="1">Belongs to the DapA family.</text>
</comment>
<comment type="caution">
    <text evidence="2">Was originally thought to be a dihydrodipicolinate synthase (DHDPS), catalyzing the condensation of (S)-aspartate-beta-semialdehyde [(S)-ASA] and pyruvate to dihydrodipicolinate (DHDP). However, it was shown in E.coli that the product of the enzymatic reaction is not dihydrodipicolinate but in fact (4S)-4-hydroxy-2,3,4,5-tetrahydro-(2S)-dipicolinic acid (HTPA), and that the consecutive dehydration reaction leading to DHDP is not spontaneous but catalyzed by DapB.</text>
</comment>
<name>DAPA_CHLT3</name>
<gene>
    <name evidence="1" type="primary">dapA</name>
    <name type="ordered locus">Ctha_1979</name>
</gene>
<feature type="chain" id="PRO_1000124024" description="4-hydroxy-tetrahydrodipicolinate synthase">
    <location>
        <begin position="1"/>
        <end position="302"/>
    </location>
</feature>
<feature type="active site" description="Proton donor/acceptor" evidence="1">
    <location>
        <position position="137"/>
    </location>
</feature>
<feature type="active site" description="Schiff-base intermediate with substrate" evidence="1">
    <location>
        <position position="166"/>
    </location>
</feature>
<feature type="binding site" evidence="1">
    <location>
        <position position="49"/>
    </location>
    <ligand>
        <name>pyruvate</name>
        <dbReference type="ChEBI" id="CHEBI:15361"/>
    </ligand>
</feature>
<feature type="binding site" evidence="1">
    <location>
        <position position="208"/>
    </location>
    <ligand>
        <name>pyruvate</name>
        <dbReference type="ChEBI" id="CHEBI:15361"/>
    </ligand>
</feature>
<feature type="site" description="Part of a proton relay during catalysis" evidence="1">
    <location>
        <position position="48"/>
    </location>
</feature>
<feature type="site" description="Part of a proton relay during catalysis" evidence="1">
    <location>
        <position position="111"/>
    </location>
</feature>
<reference key="1">
    <citation type="submission" date="2008-06" db="EMBL/GenBank/DDBJ databases">
        <title>Complete sequence of Chloroherpeton thalassium ATCC 35110.</title>
        <authorList>
            <consortium name="US DOE Joint Genome Institute"/>
            <person name="Lucas S."/>
            <person name="Copeland A."/>
            <person name="Lapidus A."/>
            <person name="Glavina del Rio T."/>
            <person name="Dalin E."/>
            <person name="Tice H."/>
            <person name="Bruce D."/>
            <person name="Goodwin L."/>
            <person name="Pitluck S."/>
            <person name="Schmutz J."/>
            <person name="Larimer F."/>
            <person name="Land M."/>
            <person name="Hauser L."/>
            <person name="Kyrpides N."/>
            <person name="Mikhailova N."/>
            <person name="Liu Z."/>
            <person name="Li T."/>
            <person name="Zhao F."/>
            <person name="Overmann J."/>
            <person name="Bryant D.A."/>
            <person name="Richardson P."/>
        </authorList>
    </citation>
    <scope>NUCLEOTIDE SEQUENCE [LARGE SCALE GENOMIC DNA]</scope>
    <source>
        <strain>ATCC 35110 / GB-78</strain>
    </source>
</reference>
<evidence type="ECO:0000255" key="1">
    <source>
        <dbReference type="HAMAP-Rule" id="MF_00418"/>
    </source>
</evidence>
<evidence type="ECO:0000305" key="2"/>
<proteinExistence type="inferred from homology"/>
<organism>
    <name type="scientific">Chloroherpeton thalassium (strain ATCC 35110 / GB-78)</name>
    <dbReference type="NCBI Taxonomy" id="517418"/>
    <lineage>
        <taxon>Bacteria</taxon>
        <taxon>Pseudomonadati</taxon>
        <taxon>Chlorobiota</taxon>
        <taxon>Chlorobiia</taxon>
        <taxon>Chlorobiales</taxon>
        <taxon>Chloroherpetonaceae</taxon>
        <taxon>Chloroherpeton</taxon>
    </lineage>
</organism>
<sequence length="302" mass="32235">MQRRELSGSAVALVTPFKKDLTVDEEALRRLVNFQIENGTDIIIPCGTTGESPTLTNEEQVQVIKIVCDEARGKAQVAAGAGTNSTIHAIELAKAAEAAGASAILSVAPYYNKPSQEGFYQHYKGIANAVSVPIIIYNVPGRTGSNIAVDTIIRLAEDLGNVLAVKEASGNMSQITEMLNRRPEKLAVLSGDDPLILPVMALGGDGIISVAANQVPKTVKDLVEAMFASDLTTAQKIHNQYYNLFTLNFIESNPVPVKYTLAKMGLIEEVYRLPLVPLSSSSKAKLDAELVQLGLVEASATA</sequence>